<gene>
    <name evidence="1" type="primary">tmk</name>
    <name type="ordered locus">Pcal_0126</name>
</gene>
<dbReference type="EC" id="2.7.4.9" evidence="1"/>
<dbReference type="EMBL" id="CP000561">
    <property type="protein sequence ID" value="ABO07564.1"/>
    <property type="molecule type" value="Genomic_DNA"/>
</dbReference>
<dbReference type="RefSeq" id="WP_011848821.1">
    <property type="nucleotide sequence ID" value="NC_009073.1"/>
</dbReference>
<dbReference type="SMR" id="A3MSE7"/>
<dbReference type="STRING" id="410359.Pcal_0126"/>
<dbReference type="GeneID" id="4908318"/>
<dbReference type="KEGG" id="pcl:Pcal_0126"/>
<dbReference type="eggNOG" id="arCOG01891">
    <property type="taxonomic scope" value="Archaea"/>
</dbReference>
<dbReference type="HOGENOM" id="CLU_049131_0_2_2"/>
<dbReference type="OrthoDB" id="43083at2157"/>
<dbReference type="Proteomes" id="UP000001431">
    <property type="component" value="Chromosome"/>
</dbReference>
<dbReference type="GO" id="GO:0005737">
    <property type="term" value="C:cytoplasm"/>
    <property type="evidence" value="ECO:0007669"/>
    <property type="project" value="TreeGrafter"/>
</dbReference>
<dbReference type="GO" id="GO:0005524">
    <property type="term" value="F:ATP binding"/>
    <property type="evidence" value="ECO:0007669"/>
    <property type="project" value="UniProtKB-UniRule"/>
</dbReference>
<dbReference type="GO" id="GO:0004798">
    <property type="term" value="F:dTMP kinase activity"/>
    <property type="evidence" value="ECO:0007669"/>
    <property type="project" value="UniProtKB-UniRule"/>
</dbReference>
<dbReference type="GO" id="GO:0006233">
    <property type="term" value="P:dTDP biosynthetic process"/>
    <property type="evidence" value="ECO:0007669"/>
    <property type="project" value="InterPro"/>
</dbReference>
<dbReference type="GO" id="GO:0006235">
    <property type="term" value="P:dTTP biosynthetic process"/>
    <property type="evidence" value="ECO:0007669"/>
    <property type="project" value="UniProtKB-UniRule"/>
</dbReference>
<dbReference type="GO" id="GO:0006227">
    <property type="term" value="P:dUDP biosynthetic process"/>
    <property type="evidence" value="ECO:0007669"/>
    <property type="project" value="TreeGrafter"/>
</dbReference>
<dbReference type="CDD" id="cd01672">
    <property type="entry name" value="TMPK"/>
    <property type="match status" value="1"/>
</dbReference>
<dbReference type="FunFam" id="3.40.50.300:FF:000225">
    <property type="entry name" value="Thymidylate kinase"/>
    <property type="match status" value="1"/>
</dbReference>
<dbReference type="Gene3D" id="3.40.50.300">
    <property type="entry name" value="P-loop containing nucleotide triphosphate hydrolases"/>
    <property type="match status" value="1"/>
</dbReference>
<dbReference type="HAMAP" id="MF_00165">
    <property type="entry name" value="Thymidylate_kinase"/>
    <property type="match status" value="1"/>
</dbReference>
<dbReference type="InterPro" id="IPR027417">
    <property type="entry name" value="P-loop_NTPase"/>
</dbReference>
<dbReference type="InterPro" id="IPR039430">
    <property type="entry name" value="Thymidylate_kin-like_dom"/>
</dbReference>
<dbReference type="InterPro" id="IPR018095">
    <property type="entry name" value="Thymidylate_kin_CS"/>
</dbReference>
<dbReference type="InterPro" id="IPR018094">
    <property type="entry name" value="Thymidylate_kinase"/>
</dbReference>
<dbReference type="NCBIfam" id="TIGR00041">
    <property type="entry name" value="DTMP_kinase"/>
    <property type="match status" value="1"/>
</dbReference>
<dbReference type="PANTHER" id="PTHR10344">
    <property type="entry name" value="THYMIDYLATE KINASE"/>
    <property type="match status" value="1"/>
</dbReference>
<dbReference type="PANTHER" id="PTHR10344:SF4">
    <property type="entry name" value="UMP-CMP KINASE 2, MITOCHONDRIAL"/>
    <property type="match status" value="1"/>
</dbReference>
<dbReference type="Pfam" id="PF02223">
    <property type="entry name" value="Thymidylate_kin"/>
    <property type="match status" value="1"/>
</dbReference>
<dbReference type="SUPFAM" id="SSF52540">
    <property type="entry name" value="P-loop containing nucleoside triphosphate hydrolases"/>
    <property type="match status" value="1"/>
</dbReference>
<dbReference type="PROSITE" id="PS01331">
    <property type="entry name" value="THYMIDYLATE_KINASE"/>
    <property type="match status" value="1"/>
</dbReference>
<feature type="chain" id="PRO_1000071563" description="Probable thymidylate kinase">
    <location>
        <begin position="1"/>
        <end position="193"/>
    </location>
</feature>
<feature type="binding site" evidence="1">
    <location>
        <begin position="7"/>
        <end position="14"/>
    </location>
    <ligand>
        <name>ATP</name>
        <dbReference type="ChEBI" id="CHEBI:30616"/>
    </ligand>
</feature>
<reference key="1">
    <citation type="submission" date="2007-02" db="EMBL/GenBank/DDBJ databases">
        <title>Complete sequence of Pyrobaculum calidifontis JCM 11548.</title>
        <authorList>
            <consortium name="US DOE Joint Genome Institute"/>
            <person name="Copeland A."/>
            <person name="Lucas S."/>
            <person name="Lapidus A."/>
            <person name="Barry K."/>
            <person name="Glavina del Rio T."/>
            <person name="Dalin E."/>
            <person name="Tice H."/>
            <person name="Pitluck S."/>
            <person name="Chain P."/>
            <person name="Malfatti S."/>
            <person name="Shin M."/>
            <person name="Vergez L."/>
            <person name="Schmutz J."/>
            <person name="Larimer F."/>
            <person name="Land M."/>
            <person name="Hauser L."/>
            <person name="Kyrpides N."/>
            <person name="Mikhailova N."/>
            <person name="Cozen A.E."/>
            <person name="Fitz-Gibbon S.T."/>
            <person name="House C.H."/>
            <person name="Saltikov C."/>
            <person name="Lowe T.M."/>
            <person name="Richardson P."/>
        </authorList>
    </citation>
    <scope>NUCLEOTIDE SEQUENCE [LARGE SCALE GENOMIC DNA]</scope>
    <source>
        <strain>DSM 21063 / JCM 11548 / VA1</strain>
    </source>
</reference>
<organism>
    <name type="scientific">Pyrobaculum calidifontis (strain DSM 21063 / JCM 11548 / VA1)</name>
    <dbReference type="NCBI Taxonomy" id="410359"/>
    <lineage>
        <taxon>Archaea</taxon>
        <taxon>Thermoproteota</taxon>
        <taxon>Thermoprotei</taxon>
        <taxon>Thermoproteales</taxon>
        <taxon>Thermoproteaceae</taxon>
        <taxon>Pyrobaculum</taxon>
    </lineage>
</organism>
<protein>
    <recommendedName>
        <fullName evidence="1">Probable thymidylate kinase</fullName>
        <ecNumber evidence="1">2.7.4.9</ecNumber>
    </recommendedName>
    <alternativeName>
        <fullName evidence="1">dTMP kinase</fullName>
    </alternativeName>
</protein>
<sequence length="193" mass="21579">MFIAVEGIDGSGKTTVIAEVAKALPRVYVTREPSGGPIGRLLKEWALRGGTADPHVDALLFAADRVEHYKREIEPKLREGYIVITERYVESSIAYQGAAGVPIEYILYINSVVPRPHLTIILDVDPAEAIKRIKARERLEKFEDVEFLRRVREIYLTRARAEGYPVIDAGRPAGEVAKDVVAIIERAMASLRR</sequence>
<evidence type="ECO:0000255" key="1">
    <source>
        <dbReference type="HAMAP-Rule" id="MF_00165"/>
    </source>
</evidence>
<name>KTHY_PYRCJ</name>
<comment type="catalytic activity">
    <reaction evidence="1">
        <text>dTMP + ATP = dTDP + ADP</text>
        <dbReference type="Rhea" id="RHEA:13517"/>
        <dbReference type="ChEBI" id="CHEBI:30616"/>
        <dbReference type="ChEBI" id="CHEBI:58369"/>
        <dbReference type="ChEBI" id="CHEBI:63528"/>
        <dbReference type="ChEBI" id="CHEBI:456216"/>
        <dbReference type="EC" id="2.7.4.9"/>
    </reaction>
</comment>
<comment type="similarity">
    <text evidence="1">Belongs to the thymidylate kinase family.</text>
</comment>
<proteinExistence type="inferred from homology"/>
<keyword id="KW-0067">ATP-binding</keyword>
<keyword id="KW-0418">Kinase</keyword>
<keyword id="KW-0545">Nucleotide biosynthesis</keyword>
<keyword id="KW-0547">Nucleotide-binding</keyword>
<keyword id="KW-0808">Transferase</keyword>
<accession>A3MSE7</accession>